<name>MCHF_ECOLX</name>
<accession>Q9EXN5</accession>
<accession>Q2WEK5</accession>
<organism>
    <name type="scientific">Escherichia coli</name>
    <dbReference type="NCBI Taxonomy" id="562"/>
    <lineage>
        <taxon>Bacteria</taxon>
        <taxon>Pseudomonadati</taxon>
        <taxon>Pseudomonadota</taxon>
        <taxon>Gammaproteobacteria</taxon>
        <taxon>Enterobacterales</taxon>
        <taxon>Enterobacteriaceae</taxon>
        <taxon>Escherichia</taxon>
    </lineage>
</organism>
<protein>
    <recommendedName>
        <fullName>Probable microcin-H47 secretion/processing ATP-binding protein MchF</fullName>
        <ecNumber>3.4.22.-</ecNumber>
        <ecNumber>7.-.-.-</ecNumber>
    </recommendedName>
</protein>
<evidence type="ECO:0000255" key="1">
    <source>
        <dbReference type="PROSITE-ProRule" id="PRU00362"/>
    </source>
</evidence>
<evidence type="ECO:0000255" key="2">
    <source>
        <dbReference type="PROSITE-ProRule" id="PRU00434"/>
    </source>
</evidence>
<evidence type="ECO:0000255" key="3">
    <source>
        <dbReference type="PROSITE-ProRule" id="PRU00441"/>
    </source>
</evidence>
<evidence type="ECO:0000305" key="4"/>
<dbReference type="EC" id="3.4.22.-"/>
<dbReference type="EC" id="7.-.-.-"/>
<dbReference type="EMBL" id="AJ009631">
    <property type="protein sequence ID" value="CAJ44959.1"/>
    <property type="molecule type" value="Genomic_DNA"/>
</dbReference>
<dbReference type="RefSeq" id="WP_001529577.1">
    <property type="nucleotide sequence ID" value="NZ_WSWV01000106.1"/>
</dbReference>
<dbReference type="SMR" id="Q9EXN5"/>
<dbReference type="MEROPS" id="C39.005"/>
<dbReference type="GO" id="GO:0005886">
    <property type="term" value="C:plasma membrane"/>
    <property type="evidence" value="ECO:0007669"/>
    <property type="project" value="UniProtKB-SubCell"/>
</dbReference>
<dbReference type="GO" id="GO:0140359">
    <property type="term" value="F:ABC-type transporter activity"/>
    <property type="evidence" value="ECO:0007669"/>
    <property type="project" value="InterPro"/>
</dbReference>
<dbReference type="GO" id="GO:0005524">
    <property type="term" value="F:ATP binding"/>
    <property type="evidence" value="ECO:0007669"/>
    <property type="project" value="UniProtKB-KW"/>
</dbReference>
<dbReference type="GO" id="GO:0016887">
    <property type="term" value="F:ATP hydrolysis activity"/>
    <property type="evidence" value="ECO:0007669"/>
    <property type="project" value="InterPro"/>
</dbReference>
<dbReference type="GO" id="GO:0034040">
    <property type="term" value="F:ATPase-coupled lipid transmembrane transporter activity"/>
    <property type="evidence" value="ECO:0007669"/>
    <property type="project" value="TreeGrafter"/>
</dbReference>
<dbReference type="GO" id="GO:0008234">
    <property type="term" value="F:cysteine-type peptidase activity"/>
    <property type="evidence" value="ECO:0007669"/>
    <property type="project" value="UniProtKB-KW"/>
</dbReference>
<dbReference type="GO" id="GO:0043213">
    <property type="term" value="P:bacteriocin transport"/>
    <property type="evidence" value="ECO:0007669"/>
    <property type="project" value="UniProtKB-KW"/>
</dbReference>
<dbReference type="GO" id="GO:0015031">
    <property type="term" value="P:protein transport"/>
    <property type="evidence" value="ECO:0007669"/>
    <property type="project" value="UniProtKB-KW"/>
</dbReference>
<dbReference type="GO" id="GO:0006508">
    <property type="term" value="P:proteolysis"/>
    <property type="evidence" value="ECO:0007669"/>
    <property type="project" value="UniProtKB-KW"/>
</dbReference>
<dbReference type="CDD" id="cd18567">
    <property type="entry name" value="ABC_6TM_CvaB_RaxB_like"/>
    <property type="match status" value="1"/>
</dbReference>
<dbReference type="CDD" id="cd02419">
    <property type="entry name" value="Peptidase_C39C"/>
    <property type="match status" value="1"/>
</dbReference>
<dbReference type="FunFam" id="3.40.50.300:FF:000299">
    <property type="entry name" value="ABC transporter ATP-binding protein/permease"/>
    <property type="match status" value="1"/>
</dbReference>
<dbReference type="Gene3D" id="1.20.1560.10">
    <property type="entry name" value="ABC transporter type 1, transmembrane domain"/>
    <property type="match status" value="1"/>
</dbReference>
<dbReference type="Gene3D" id="3.90.70.10">
    <property type="entry name" value="Cysteine proteinases"/>
    <property type="match status" value="1"/>
</dbReference>
<dbReference type="Gene3D" id="3.40.50.300">
    <property type="entry name" value="P-loop containing nucleotide triphosphate hydrolases"/>
    <property type="match status" value="1"/>
</dbReference>
<dbReference type="InterPro" id="IPR003593">
    <property type="entry name" value="AAA+_ATPase"/>
</dbReference>
<dbReference type="InterPro" id="IPR011527">
    <property type="entry name" value="ABC1_TM_dom"/>
</dbReference>
<dbReference type="InterPro" id="IPR036640">
    <property type="entry name" value="ABC1_TM_sf"/>
</dbReference>
<dbReference type="InterPro" id="IPR003439">
    <property type="entry name" value="ABC_transporter-like_ATP-bd"/>
</dbReference>
<dbReference type="InterPro" id="IPR017871">
    <property type="entry name" value="ABC_transporter-like_CS"/>
</dbReference>
<dbReference type="InterPro" id="IPR033838">
    <property type="entry name" value="CvaB_peptidase"/>
</dbReference>
<dbReference type="InterPro" id="IPR027417">
    <property type="entry name" value="P-loop_NTPase"/>
</dbReference>
<dbReference type="InterPro" id="IPR005074">
    <property type="entry name" value="Peptidase_C39"/>
</dbReference>
<dbReference type="InterPro" id="IPR039421">
    <property type="entry name" value="Type_1_exporter"/>
</dbReference>
<dbReference type="PANTHER" id="PTHR24221">
    <property type="entry name" value="ATP-BINDING CASSETTE SUB-FAMILY B"/>
    <property type="match status" value="1"/>
</dbReference>
<dbReference type="PANTHER" id="PTHR24221:SF606">
    <property type="entry name" value="COLICIN V SECRETION-PROCESSING ATP-BINDING PROTEIN"/>
    <property type="match status" value="1"/>
</dbReference>
<dbReference type="Pfam" id="PF00664">
    <property type="entry name" value="ABC_membrane"/>
    <property type="match status" value="1"/>
</dbReference>
<dbReference type="Pfam" id="PF00005">
    <property type="entry name" value="ABC_tran"/>
    <property type="match status" value="1"/>
</dbReference>
<dbReference type="Pfam" id="PF03412">
    <property type="entry name" value="Peptidase_C39"/>
    <property type="match status" value="1"/>
</dbReference>
<dbReference type="SMART" id="SM00382">
    <property type="entry name" value="AAA"/>
    <property type="match status" value="1"/>
</dbReference>
<dbReference type="SUPFAM" id="SSF90123">
    <property type="entry name" value="ABC transporter transmembrane region"/>
    <property type="match status" value="1"/>
</dbReference>
<dbReference type="SUPFAM" id="SSF52540">
    <property type="entry name" value="P-loop containing nucleoside triphosphate hydrolases"/>
    <property type="match status" value="1"/>
</dbReference>
<dbReference type="PROSITE" id="PS50929">
    <property type="entry name" value="ABC_TM1F"/>
    <property type="match status" value="1"/>
</dbReference>
<dbReference type="PROSITE" id="PS00211">
    <property type="entry name" value="ABC_TRANSPORTER_1"/>
    <property type="match status" value="1"/>
</dbReference>
<dbReference type="PROSITE" id="PS50893">
    <property type="entry name" value="ABC_TRANSPORTER_2"/>
    <property type="match status" value="1"/>
</dbReference>
<dbReference type="PROSITE" id="PS50990">
    <property type="entry name" value="PEPTIDASE_C39"/>
    <property type="match status" value="1"/>
</dbReference>
<gene>
    <name type="primary">mchF</name>
</gene>
<reference key="1">
    <citation type="journal article" date="2001" name="Antimicrob. Agents Chemother.">
        <title>The structure, function, and origin of the microcin H47 ATP-binding cassette exporter indicate its relatedness to that of colicin V.</title>
        <authorList>
            <person name="Azpiroz M.F."/>
            <person name="Rodriguez E."/>
            <person name="Lavina M."/>
        </authorList>
    </citation>
    <scope>NUCLEOTIDE SEQUENCE [GENOMIC DNA]</scope>
    <source>
        <strain>H47</strain>
    </source>
</reference>
<reference key="2">
    <citation type="journal article" date="2004" name="Antimicrob. Agents Chemother.">
        <title>Involvement of enterobactin synthesis pathway in production of microcin H47.</title>
        <authorList>
            <person name="Azpiroz M.F."/>
            <person name="Lavina M."/>
        </authorList>
    </citation>
    <scope>NUCLEOTIDE SEQUENCE [GENOMIC DNA]</scope>
    <source>
        <strain>H47</strain>
    </source>
</reference>
<proteinExistence type="inferred from homology"/>
<feature type="chain" id="PRO_0000092490" description="Probable microcin-H47 secretion/processing ATP-binding protein MchF">
    <location>
        <begin position="1"/>
        <end position="698"/>
    </location>
</feature>
<feature type="transmembrane region" description="Helical" evidence="3">
    <location>
        <begin position="33"/>
        <end position="53"/>
    </location>
</feature>
<feature type="transmembrane region" description="Helical" evidence="3">
    <location>
        <begin position="90"/>
        <end position="110"/>
    </location>
</feature>
<feature type="transmembrane region" description="Helical" evidence="3">
    <location>
        <begin position="289"/>
        <end position="311"/>
    </location>
</feature>
<feature type="transmembrane region" description="Helical" evidence="3">
    <location>
        <begin position="315"/>
        <end position="337"/>
    </location>
</feature>
<feature type="transmembrane region" description="Helical" evidence="3">
    <location>
        <begin position="397"/>
        <end position="417"/>
    </location>
</feature>
<feature type="domain" description="Peptidase C39" evidence="1">
    <location>
        <begin position="26"/>
        <end position="145"/>
    </location>
</feature>
<feature type="domain" description="ABC transmembrane type-1" evidence="3">
    <location>
        <begin position="176"/>
        <end position="458"/>
    </location>
</feature>
<feature type="domain" description="ABC transporter" evidence="1 2">
    <location>
        <begin position="492"/>
        <end position="698"/>
    </location>
</feature>
<feature type="active site" evidence="1">
    <location>
        <position position="32"/>
    </location>
</feature>
<feature type="binding site" evidence="1 2">
    <location>
        <begin position="526"/>
        <end position="533"/>
    </location>
    <ligand>
        <name>ATP</name>
        <dbReference type="ChEBI" id="CHEBI:30616"/>
    </ligand>
</feature>
<comment type="function">
    <text>Probably involved, in conjunction with MchE, in the secretion of microcin H47.</text>
</comment>
<comment type="subcellular location">
    <subcellularLocation>
        <location evidence="4">Cell membrane</location>
        <topology evidence="4">Multi-pass membrane protein</topology>
    </subcellularLocation>
</comment>
<comment type="similarity">
    <text evidence="4">Belongs to the ABC transporter superfamily.</text>
</comment>
<keyword id="KW-0067">ATP-binding</keyword>
<keyword id="KW-0080">Bacteriocin transport</keyword>
<keyword id="KW-1003">Cell membrane</keyword>
<keyword id="KW-0378">Hydrolase</keyword>
<keyword id="KW-0472">Membrane</keyword>
<keyword id="KW-0547">Nucleotide-binding</keyword>
<keyword id="KW-0645">Protease</keyword>
<keyword id="KW-0653">Protein transport</keyword>
<keyword id="KW-0788">Thiol protease</keyword>
<keyword id="KW-1278">Translocase</keyword>
<keyword id="KW-0812">Transmembrane</keyword>
<keyword id="KW-1133">Transmembrane helix</keyword>
<keyword id="KW-0813">Transport</keyword>
<sequence length="698" mass="77851">MTNGSFRQIINQLDMRWRRRVPVIHQTETAECGLACLAMICGHFGKNIDLISLRRKFNLSARGANLAGINGIAEQLGMVTRALSLELDELGALKMPCILHWDFSHFVVLVSVKRNRYVLHDPARGRRYLGREEMSRYFTGIALEVWPGSEFLAETQQIRISLRSLINSIYGIKRTLAKIFCLSVVIEAINLVMPVGTQLVMDHAIPAGDRGLLTLISAGLMFFILLRAAVSMLRAWSSLVMSTLINIQWQSGLFNHLLRLPLAFFERRKLGDIQSRFGSLDTLRATFTTCVVGAIMDSIMVVGVFVMMLLYGGYLTWIVLGFTMVYVLIRLVTYGYYRQISEETLVRGARASSYFMESLYGIATVKIQGMAGIRGTHWLNLKIDAINSGIKLTKMDLLFGGINTFVAACDQVAILWLGASLVIDNQMTIGMFVAFGSFRGQFSDRVASLTSFLLQLRIMSLHNERIADIALHEKEEKKPEIEIVADMSPVSLETTDLSYRYDSQSAQVFSGLNLSVAPGESVAITGASGAGKTTLMKVLCGLFEPDSGKVLVNGTDIRQLGINNYHRMIACVMQDDRLFSGSIRENICGFAEETDDEWMTECARASHIHDVIMKMPMGYETLIGELGEGLSGGQKQRIFIARALYRKPGILFMDEATSSLDTESERFVNAAIKKMNITRVIIAHRETTLRTVDRIISI</sequence>